<evidence type="ECO:0000250" key="1">
    <source>
        <dbReference type="UniProtKB" id="O25836"/>
    </source>
</evidence>
<evidence type="ECO:0000255" key="2">
    <source>
        <dbReference type="PROSITE-ProRule" id="PRU00054"/>
    </source>
</evidence>
<evidence type="ECO:0000269" key="3">
    <source>
    </source>
</evidence>
<evidence type="ECO:0000269" key="4">
    <source>
    </source>
</evidence>
<evidence type="ECO:0000303" key="5">
    <source>
    </source>
</evidence>
<evidence type="ECO:0000303" key="6">
    <source>
    </source>
</evidence>
<evidence type="ECO:0000305" key="7"/>
<evidence type="ECO:0000312" key="8">
    <source>
        <dbReference type="EMBL" id="BAH89067.1"/>
    </source>
</evidence>
<name>SYMPP_STHOU</name>
<sequence>YVRPVSSWKVAVFEHQVIPPKTDMETREEALDALKLNSDVYHEAVLESRSKGVKMIVFPEYGLYDINTLTRTRMDLMAEKVPHPKHGHRNPCDEPEYQTQSSEMLRTFSCMAKENDMYMVVNMAGREPCRRATEPECPGDKQLLYNTNVAFNNEGDVVARYYKTHLFWEEGWFNSSKNYEMALWDTPIGKFGTFMCFDFQAVQLIEQYNVRHIAYPASWVNLPPIYQSIQSHSAFARFAKINLLAASVHRLETSTYGSGIYSPNGAEIFYFRPDIPKSKLLVAEILPIHVKKPEQTVVNFDNPVFPSEDDDVQDLFDRGDFAFLKYKRMTTRAGTVEVCQKSFCCKARYAVKDRFKEVYAVGVYDGLLSAGANNLYFQICTVIQCPHKKCGLKISKVRTHFKYLNLRADGWLDRYVFPSYTVMYNNYIALDPFVWNYTEAGGIETKPGTSTPLHSANLVARIYAKDSSKHVHQSHPIDEGVIKMAVKYMLYVMAAYVYAAS</sequence>
<dbReference type="EC" id="3.5.-.-"/>
<dbReference type="EMBL" id="AB447990">
    <property type="protein sequence ID" value="BAH89067.1"/>
    <property type="molecule type" value="mRNA"/>
</dbReference>
<dbReference type="EMBL" id="AB447991">
    <property type="protein sequence ID" value="BAH89068.1"/>
    <property type="molecule type" value="mRNA"/>
</dbReference>
<dbReference type="SMR" id="C6KYS2"/>
<dbReference type="GO" id="GO:0016787">
    <property type="term" value="F:hydrolase activity"/>
    <property type="evidence" value="ECO:0007669"/>
    <property type="project" value="UniProtKB-KW"/>
</dbReference>
<dbReference type="GO" id="GO:0008218">
    <property type="term" value="P:bioluminescence"/>
    <property type="evidence" value="ECO:0000314"/>
    <property type="project" value="UniProtKB"/>
</dbReference>
<dbReference type="Gene3D" id="3.60.110.10">
    <property type="entry name" value="Carbon-nitrogen hydrolase"/>
    <property type="match status" value="1"/>
</dbReference>
<dbReference type="InterPro" id="IPR040154">
    <property type="entry name" value="Biotinidase/VNN"/>
</dbReference>
<dbReference type="InterPro" id="IPR003010">
    <property type="entry name" value="C-N_Hydrolase"/>
</dbReference>
<dbReference type="InterPro" id="IPR036526">
    <property type="entry name" value="C-N_Hydrolase_sf"/>
</dbReference>
<dbReference type="InterPro" id="IPR043957">
    <property type="entry name" value="Vanin_C"/>
</dbReference>
<dbReference type="PANTHER" id="PTHR10609">
    <property type="entry name" value="BIOTINIDASE-RELATED"/>
    <property type="match status" value="1"/>
</dbReference>
<dbReference type="PANTHER" id="PTHR10609:SF27">
    <property type="entry name" value="CN HYDROLASE DOMAIN-CONTAINING PROTEIN-RELATED"/>
    <property type="match status" value="1"/>
</dbReference>
<dbReference type="Pfam" id="PF00795">
    <property type="entry name" value="CN_hydrolase"/>
    <property type="match status" value="1"/>
</dbReference>
<dbReference type="Pfam" id="PF19018">
    <property type="entry name" value="Vanin_C"/>
    <property type="match status" value="1"/>
</dbReference>
<dbReference type="SUPFAM" id="SSF56317">
    <property type="entry name" value="Carbon-nitrogen hydrolase"/>
    <property type="match status" value="1"/>
</dbReference>
<dbReference type="PROSITE" id="PS50263">
    <property type="entry name" value="CN_HYDROLASE"/>
    <property type="match status" value="1"/>
</dbReference>
<proteinExistence type="evidence at protein level"/>
<comment type="function">
    <text evidence="3 4">Monovalent ion-dependent bioluminescence photoprotein. Displays an emission peak at 470 nm (blue light). Trace amounts of monovalent ion trigger the intramolecular oxidation of the chromophore, didehydrocoelenterazine, with the emission of light.</text>
</comment>
<comment type="tissue specificity">
    <text evidence="3 4">Photogenic gland (at protein level).</text>
</comment>
<comment type="miscellaneous">
    <text evidence="3">On the 2D-gel the determined MW of this protein is: 60 kDa.</text>
</comment>
<comment type="similarity">
    <text evidence="7">Belongs to the carbon-nitrogen hydrolase superfamily. BTD/VNN family.</text>
</comment>
<reference evidence="7" key="1">
    <citation type="journal article" date="2002" name="Biochem. Biophys. Res. Commun.">
        <title>A novel photoprotein from oceanic squid (Symplectoteuthis oualaniensis) with sequence similarity to mammalian carbon-nitrogen hydrolase domains.</title>
        <authorList>
            <person name="Fujii T."/>
            <person name="Ahn J.Y."/>
            <person name="Kuse M."/>
            <person name="Mori H."/>
            <person name="Matsuda T."/>
            <person name="Isobe M."/>
        </authorList>
    </citation>
    <scope>PROTEIN SEQUENCE OF 1-20; 36-49; 55-66; 90-106; 114-126; 132-170; 178-190 AND 212-230</scope>
    <scope>FUNCTION</scope>
    <source>
        <tissue evidence="3">Photogenic organ</tissue>
    </source>
</reference>
<reference evidence="7 8" key="2">
    <citation type="submission" date="2008-07" db="EMBL/GenBank/DDBJ databases">
        <title>A photoprotein of luminous squid.</title>
        <authorList>
            <person name="Ohsima K."/>
            <person name="Isobe M."/>
            <person name="Matsuda T."/>
        </authorList>
    </citation>
    <scope>NUCLEOTIDE SEQUENCE [MRNA] OF 13-501</scope>
    <source>
        <tissue evidence="8">Photogenic organ</tissue>
    </source>
</reference>
<reference evidence="7" key="3">
    <citation type="journal article" date="2008" name="Proc. Jpn. Acad., B, Phys. Biol. Sci.">
        <title>Cysteine-390 is the binding site of luminous substance with symplectin, a photoprotein from Okinawan squid, Symplectoteuthis oualaniensis.</title>
        <authorList>
            <person name="Isobe M."/>
            <person name="Kuse M."/>
            <person name="Tani N."/>
            <person name="Fujii T."/>
            <person name="Matsuda T."/>
        </authorList>
    </citation>
    <scope>FUNCTION</scope>
    <scope>TISSUE SPECIFICITY</scope>
    <scope>POST-TRANSLATIONAL MODIFICATION</scope>
</reference>
<keyword id="KW-0903">Direct protein sequencing</keyword>
<keyword id="KW-0378">Hydrolase</keyword>
<keyword id="KW-0455">Luminescence</keyword>
<keyword id="KW-0599">Photoprotein</keyword>
<keyword id="KW-0630">Potassium</keyword>
<keyword id="KW-0915">Sodium</keyword>
<gene>
    <name evidence="8" type="primary">sympp</name>
</gene>
<feature type="chain" id="PRO_0000395599" description="Symplectin">
    <location>
        <begin position="1"/>
        <end position="501"/>
    </location>
</feature>
<feature type="domain" description="CN hydrolase" evidence="2">
    <location>
        <begin position="20"/>
        <end position="287"/>
    </location>
</feature>
<feature type="active site" description="Proton acceptor" evidence="2">
    <location>
        <position position="60"/>
    </location>
</feature>
<feature type="active site" description="Proton donor" evidence="2">
    <location>
        <position position="163"/>
    </location>
</feature>
<feature type="active site" description="Nucleophile" evidence="1 2">
    <location>
        <position position="196"/>
    </location>
</feature>
<feature type="modified residue" description="S-(coelenterazin-3a-yl)cysteine" evidence="4">
    <location>
        <position position="390"/>
    </location>
</feature>
<feature type="sequence conflict" description="In Ref. 2; BAH89068." evidence="7" ref="2">
    <original>K</original>
    <variation>R</variation>
    <location>
        <position position="80"/>
    </location>
</feature>
<feature type="sequence conflict" description="In Ref. 2; BAH89068." evidence="7" ref="2">
    <original>H</original>
    <variation>L</variation>
    <location>
        <position position="86"/>
    </location>
</feature>
<feature type="sequence conflict" description="In Ref. 1; AA sequence." evidence="7" ref="1">
    <original>W</original>
    <variation>N</variation>
    <location>
        <position position="168"/>
    </location>
</feature>
<feature type="sequence conflict" description="In Ref. 1; AA sequence." evidence="7" ref="1">
    <original>T</original>
    <variation>I</variation>
    <location>
        <position position="186"/>
    </location>
</feature>
<feature type="sequence conflict" description="In Ref. 2; BAH89068." evidence="7" ref="2">
    <original>E</original>
    <variation>D</variation>
    <location>
        <position position="284"/>
    </location>
</feature>
<feature type="sequence conflict" description="In Ref. 2; BAH89068." evidence="7" ref="2">
    <original>E</original>
    <variation>V</variation>
    <location>
        <position position="439"/>
    </location>
</feature>
<feature type="sequence conflict" description="In Ref. 2; BAH89068." evidence="7" ref="2">
    <original>SH</original>
    <variation>PN</variation>
    <location>
        <begin position="474"/>
        <end position="475"/>
    </location>
</feature>
<protein>
    <recommendedName>
        <fullName evidence="5 6">Symplectin</fullName>
        <ecNumber>3.5.-.-</ecNumber>
    </recommendedName>
</protein>
<accession>C6KYS2</accession>
<accession>C6KYS3</accession>
<organism>
    <name type="scientific">Sthenoteuthis oualaniensis</name>
    <name type="common">Purpleback flying squid</name>
    <name type="synonym">Symplectoteuthis oualaniensis</name>
    <dbReference type="NCBI Taxonomy" id="34553"/>
    <lineage>
        <taxon>Eukaryota</taxon>
        <taxon>Metazoa</taxon>
        <taxon>Spiralia</taxon>
        <taxon>Lophotrochozoa</taxon>
        <taxon>Mollusca</taxon>
        <taxon>Cephalopoda</taxon>
        <taxon>Coleoidea</taxon>
        <taxon>Decapodiformes</taxon>
        <taxon>Oegopsida</taxon>
        <taxon>Ommastrephidae</taxon>
        <taxon>Sthenoteuthis</taxon>
    </lineage>
</organism>